<feature type="chain" id="PRO_0000344315" description="Small ribosomal subunit protein uS7">
    <location>
        <begin position="1"/>
        <end position="194"/>
    </location>
</feature>
<accession>Q2FS70</accession>
<organism>
    <name type="scientific">Methanospirillum hungatei JF-1 (strain ATCC 27890 / DSM 864 / NBRC 100397 / JF-1)</name>
    <dbReference type="NCBI Taxonomy" id="323259"/>
    <lineage>
        <taxon>Archaea</taxon>
        <taxon>Methanobacteriati</taxon>
        <taxon>Methanobacteriota</taxon>
        <taxon>Stenosarchaea group</taxon>
        <taxon>Methanomicrobia</taxon>
        <taxon>Methanomicrobiales</taxon>
        <taxon>Methanospirillaceae</taxon>
        <taxon>Methanospirillum</taxon>
    </lineage>
</organism>
<dbReference type="EMBL" id="CP000254">
    <property type="protein sequence ID" value="ABD42521.1"/>
    <property type="molecule type" value="Genomic_DNA"/>
</dbReference>
<dbReference type="RefSeq" id="WP_011449775.1">
    <property type="nucleotide sequence ID" value="NC_007796.1"/>
</dbReference>
<dbReference type="SMR" id="Q2FS70"/>
<dbReference type="FunCoup" id="Q2FS70">
    <property type="interactions" value="169"/>
</dbReference>
<dbReference type="STRING" id="323259.Mhun_2829"/>
<dbReference type="EnsemblBacteria" id="ABD42521">
    <property type="protein sequence ID" value="ABD42521"/>
    <property type="gene ID" value="Mhun_2829"/>
</dbReference>
<dbReference type="GeneID" id="3923098"/>
<dbReference type="KEGG" id="mhu:Mhun_2829"/>
<dbReference type="eggNOG" id="arCOG04254">
    <property type="taxonomic scope" value="Archaea"/>
</dbReference>
<dbReference type="HOGENOM" id="CLU_063975_0_0_2"/>
<dbReference type="InParanoid" id="Q2FS70"/>
<dbReference type="OrthoDB" id="45346at2157"/>
<dbReference type="Proteomes" id="UP000001941">
    <property type="component" value="Chromosome"/>
</dbReference>
<dbReference type="GO" id="GO:0015935">
    <property type="term" value="C:small ribosomal subunit"/>
    <property type="evidence" value="ECO:0007669"/>
    <property type="project" value="InterPro"/>
</dbReference>
<dbReference type="GO" id="GO:0019843">
    <property type="term" value="F:rRNA binding"/>
    <property type="evidence" value="ECO:0007669"/>
    <property type="project" value="UniProtKB-UniRule"/>
</dbReference>
<dbReference type="GO" id="GO:0003735">
    <property type="term" value="F:structural constituent of ribosome"/>
    <property type="evidence" value="ECO:0007669"/>
    <property type="project" value="InterPro"/>
</dbReference>
<dbReference type="GO" id="GO:0006412">
    <property type="term" value="P:translation"/>
    <property type="evidence" value="ECO:0007669"/>
    <property type="project" value="UniProtKB-UniRule"/>
</dbReference>
<dbReference type="Gene3D" id="1.10.455.10">
    <property type="entry name" value="Ribosomal protein S7 domain"/>
    <property type="match status" value="1"/>
</dbReference>
<dbReference type="HAMAP" id="MF_00480_A">
    <property type="entry name" value="Ribosomal_uS7_A"/>
    <property type="match status" value="1"/>
</dbReference>
<dbReference type="InterPro" id="IPR000235">
    <property type="entry name" value="Ribosomal_uS7"/>
</dbReference>
<dbReference type="InterPro" id="IPR026018">
    <property type="entry name" value="Ribosomal_uS7_arc"/>
</dbReference>
<dbReference type="InterPro" id="IPR020606">
    <property type="entry name" value="Ribosomal_uS7_CS"/>
</dbReference>
<dbReference type="InterPro" id="IPR023798">
    <property type="entry name" value="Ribosomal_uS7_dom"/>
</dbReference>
<dbReference type="InterPro" id="IPR036823">
    <property type="entry name" value="Ribosomal_uS7_dom_sf"/>
</dbReference>
<dbReference type="InterPro" id="IPR005716">
    <property type="entry name" value="Ribosomal_uS7_euk/arc"/>
</dbReference>
<dbReference type="NCBIfam" id="NF003106">
    <property type="entry name" value="PRK04027.1"/>
    <property type="match status" value="1"/>
</dbReference>
<dbReference type="NCBIfam" id="TIGR01028">
    <property type="entry name" value="uS7_euk_arch"/>
    <property type="match status" value="1"/>
</dbReference>
<dbReference type="PANTHER" id="PTHR11205">
    <property type="entry name" value="RIBOSOMAL PROTEIN S7"/>
    <property type="match status" value="1"/>
</dbReference>
<dbReference type="Pfam" id="PF00177">
    <property type="entry name" value="Ribosomal_S7"/>
    <property type="match status" value="1"/>
</dbReference>
<dbReference type="PIRSF" id="PIRSF002122">
    <property type="entry name" value="RPS7p_RPS7a_RPS5e_RPS7o"/>
    <property type="match status" value="1"/>
</dbReference>
<dbReference type="SUPFAM" id="SSF47973">
    <property type="entry name" value="Ribosomal protein S7"/>
    <property type="match status" value="1"/>
</dbReference>
<dbReference type="PROSITE" id="PS00052">
    <property type="entry name" value="RIBOSOMAL_S7"/>
    <property type="match status" value="1"/>
</dbReference>
<evidence type="ECO:0000255" key="1">
    <source>
        <dbReference type="HAMAP-Rule" id="MF_00480"/>
    </source>
</evidence>
<evidence type="ECO:0000305" key="2"/>
<name>RS7_METHJ</name>
<sequence>MSEEVSAPARLLFNRWDTSEVTIRDPGIARYVNLNSMMVPHSCGRLTRQEFHKANMLIVERLINQLMRTEVNTGKKQLAIRIVRDAFEIVHQKTKKNPIEVLCDAVANAGPREETVRLKYGGINVPKSVDTAPMRRVNTAVGLIAAGVYSASHKKKKPVANALAEELIAAANGDVKCYSVAKREERERVAKSAR</sequence>
<protein>
    <recommendedName>
        <fullName evidence="1">Small ribosomal subunit protein uS7</fullName>
    </recommendedName>
    <alternativeName>
        <fullName evidence="2">30S ribosomal protein S7</fullName>
    </alternativeName>
</protein>
<gene>
    <name evidence="1" type="primary">rps7</name>
    <name type="ordered locus">Mhun_2829</name>
</gene>
<proteinExistence type="inferred from homology"/>
<reference key="1">
    <citation type="journal article" date="2016" name="Stand. Genomic Sci.">
        <title>Complete genome sequence of Methanospirillum hungatei type strain JF1.</title>
        <authorList>
            <person name="Gunsalus R.P."/>
            <person name="Cook L.E."/>
            <person name="Crable B."/>
            <person name="Rohlin L."/>
            <person name="McDonald E."/>
            <person name="Mouttaki H."/>
            <person name="Sieber J.R."/>
            <person name="Poweleit N."/>
            <person name="Zhou H."/>
            <person name="Lapidus A.L."/>
            <person name="Daligault H.E."/>
            <person name="Land M."/>
            <person name="Gilna P."/>
            <person name="Ivanova N."/>
            <person name="Kyrpides N."/>
            <person name="Culley D.E."/>
            <person name="McInerney M.J."/>
        </authorList>
    </citation>
    <scope>NUCLEOTIDE SEQUENCE [LARGE SCALE GENOMIC DNA]</scope>
    <source>
        <strain>ATCC 27890 / DSM 864 / NBRC 100397 / JF-1</strain>
    </source>
</reference>
<keyword id="KW-1185">Reference proteome</keyword>
<keyword id="KW-0687">Ribonucleoprotein</keyword>
<keyword id="KW-0689">Ribosomal protein</keyword>
<keyword id="KW-0694">RNA-binding</keyword>
<keyword id="KW-0699">rRNA-binding</keyword>
<comment type="function">
    <text evidence="1">One of the primary rRNA binding proteins, it binds directly to 16S rRNA where it nucleates assembly of the head domain of the 30S subunit. Is located at the subunit interface close to the decoding center.</text>
</comment>
<comment type="subunit">
    <text evidence="1">Part of the 30S ribosomal subunit.</text>
</comment>
<comment type="similarity">
    <text evidence="1">Belongs to the universal ribosomal protein uS7 family.</text>
</comment>